<gene>
    <name evidence="1" type="primary">atpD</name>
    <name type="ordered locus">Tpet_1181</name>
</gene>
<keyword id="KW-0066">ATP synthesis</keyword>
<keyword id="KW-0067">ATP-binding</keyword>
<keyword id="KW-0997">Cell inner membrane</keyword>
<keyword id="KW-1003">Cell membrane</keyword>
<keyword id="KW-0139">CF(1)</keyword>
<keyword id="KW-0375">Hydrogen ion transport</keyword>
<keyword id="KW-0406">Ion transport</keyword>
<keyword id="KW-0472">Membrane</keyword>
<keyword id="KW-0547">Nucleotide-binding</keyword>
<keyword id="KW-1278">Translocase</keyword>
<keyword id="KW-0813">Transport</keyword>
<sequence>MAKGSKGFIVSIMGPVVDVKFPEEELPDIYNALEVVNPQTGQKVVLEVEQLIGDGVVRTVAMDSTDGLTKGLEVVDTGAPITAPVGKEVLGRILNVIGEPVDEAGEIKAKERWPIHRPAPELVEQSTEIEILETGIKVIDLLAPFPKGGKIGFFGGAGVGKTVLVMELIRNIAIEHKGFSVFAGVGERTREGNELWLEMQESGVLGNTVLVFGQMNEPPGARFRVALTALTIAEYFRDVEGRDVLLFIDNIFRFVQAGSEVSALLGRMPSAVGYQPTLATDMGELQERITSTRRGSITSVQAIYVPADDITDPAPATTFAHLDATVVLSRRIAELGLYPAVDPLDSSSKILDPAIVGREHYEVARGVQEVLQRYKDLQDIIAILGVEELSPEDKLVVHRARRIQRFLSQPFHVAERFTGRPGRYVPIEETIRGFKEILDGKLDDVPEQAFLMAGNIDEVKERAKEMRS</sequence>
<organism>
    <name type="scientific">Thermotoga petrophila (strain ATCC BAA-488 / DSM 13995 / JCM 10881 / RKU-1)</name>
    <dbReference type="NCBI Taxonomy" id="390874"/>
    <lineage>
        <taxon>Bacteria</taxon>
        <taxon>Thermotogati</taxon>
        <taxon>Thermotogota</taxon>
        <taxon>Thermotogae</taxon>
        <taxon>Thermotogales</taxon>
        <taxon>Thermotogaceae</taxon>
        <taxon>Thermotoga</taxon>
    </lineage>
</organism>
<accession>A5ILX2</accession>
<evidence type="ECO:0000255" key="1">
    <source>
        <dbReference type="HAMAP-Rule" id="MF_01347"/>
    </source>
</evidence>
<dbReference type="EC" id="7.1.2.2" evidence="1"/>
<dbReference type="EMBL" id="CP000702">
    <property type="protein sequence ID" value="ABQ47195.1"/>
    <property type="molecule type" value="Genomic_DNA"/>
</dbReference>
<dbReference type="RefSeq" id="WP_004082059.1">
    <property type="nucleotide sequence ID" value="NC_009486.1"/>
</dbReference>
<dbReference type="SMR" id="A5ILX2"/>
<dbReference type="STRING" id="390874.Tpet_1181"/>
<dbReference type="KEGG" id="tpt:Tpet_1181"/>
<dbReference type="eggNOG" id="COG0055">
    <property type="taxonomic scope" value="Bacteria"/>
</dbReference>
<dbReference type="HOGENOM" id="CLU_022398_0_2_0"/>
<dbReference type="Proteomes" id="UP000006558">
    <property type="component" value="Chromosome"/>
</dbReference>
<dbReference type="GO" id="GO:0005886">
    <property type="term" value="C:plasma membrane"/>
    <property type="evidence" value="ECO:0007669"/>
    <property type="project" value="UniProtKB-SubCell"/>
</dbReference>
<dbReference type="GO" id="GO:0045259">
    <property type="term" value="C:proton-transporting ATP synthase complex"/>
    <property type="evidence" value="ECO:0007669"/>
    <property type="project" value="UniProtKB-KW"/>
</dbReference>
<dbReference type="GO" id="GO:0005524">
    <property type="term" value="F:ATP binding"/>
    <property type="evidence" value="ECO:0007669"/>
    <property type="project" value="UniProtKB-UniRule"/>
</dbReference>
<dbReference type="GO" id="GO:0016887">
    <property type="term" value="F:ATP hydrolysis activity"/>
    <property type="evidence" value="ECO:0007669"/>
    <property type="project" value="InterPro"/>
</dbReference>
<dbReference type="GO" id="GO:0046933">
    <property type="term" value="F:proton-transporting ATP synthase activity, rotational mechanism"/>
    <property type="evidence" value="ECO:0007669"/>
    <property type="project" value="UniProtKB-UniRule"/>
</dbReference>
<dbReference type="CDD" id="cd18110">
    <property type="entry name" value="ATP-synt_F1_beta_C"/>
    <property type="match status" value="1"/>
</dbReference>
<dbReference type="CDD" id="cd18115">
    <property type="entry name" value="ATP-synt_F1_beta_N"/>
    <property type="match status" value="1"/>
</dbReference>
<dbReference type="CDD" id="cd01133">
    <property type="entry name" value="F1-ATPase_beta_CD"/>
    <property type="match status" value="1"/>
</dbReference>
<dbReference type="FunFam" id="1.10.1140.10:FF:000001">
    <property type="entry name" value="ATP synthase subunit beta"/>
    <property type="match status" value="1"/>
</dbReference>
<dbReference type="FunFam" id="2.40.10.170:FF:000005">
    <property type="entry name" value="ATP synthase subunit beta"/>
    <property type="match status" value="1"/>
</dbReference>
<dbReference type="FunFam" id="3.40.50.300:FF:000026">
    <property type="entry name" value="ATP synthase subunit beta"/>
    <property type="match status" value="1"/>
</dbReference>
<dbReference type="Gene3D" id="2.40.10.170">
    <property type="match status" value="1"/>
</dbReference>
<dbReference type="Gene3D" id="1.10.1140.10">
    <property type="entry name" value="Bovine Mitochondrial F1-atpase, Atp Synthase Beta Chain, Chain D, domain 3"/>
    <property type="match status" value="1"/>
</dbReference>
<dbReference type="Gene3D" id="3.40.50.300">
    <property type="entry name" value="P-loop containing nucleotide triphosphate hydrolases"/>
    <property type="match status" value="1"/>
</dbReference>
<dbReference type="HAMAP" id="MF_01347">
    <property type="entry name" value="ATP_synth_beta_bact"/>
    <property type="match status" value="1"/>
</dbReference>
<dbReference type="InterPro" id="IPR003593">
    <property type="entry name" value="AAA+_ATPase"/>
</dbReference>
<dbReference type="InterPro" id="IPR055190">
    <property type="entry name" value="ATP-synt_VA_C"/>
</dbReference>
<dbReference type="InterPro" id="IPR005722">
    <property type="entry name" value="ATP_synth_F1_bsu"/>
</dbReference>
<dbReference type="InterPro" id="IPR020003">
    <property type="entry name" value="ATPase_a/bsu_AS"/>
</dbReference>
<dbReference type="InterPro" id="IPR050053">
    <property type="entry name" value="ATPase_alpha/beta_chains"/>
</dbReference>
<dbReference type="InterPro" id="IPR004100">
    <property type="entry name" value="ATPase_F1/V1/A1_a/bsu_N"/>
</dbReference>
<dbReference type="InterPro" id="IPR036121">
    <property type="entry name" value="ATPase_F1/V1/A1_a/bsu_N_sf"/>
</dbReference>
<dbReference type="InterPro" id="IPR000194">
    <property type="entry name" value="ATPase_F1/V1/A1_a/bsu_nucl-bd"/>
</dbReference>
<dbReference type="InterPro" id="IPR024034">
    <property type="entry name" value="ATPase_F1/V1_b/a_C"/>
</dbReference>
<dbReference type="InterPro" id="IPR027417">
    <property type="entry name" value="P-loop_NTPase"/>
</dbReference>
<dbReference type="NCBIfam" id="TIGR01039">
    <property type="entry name" value="atpD"/>
    <property type="match status" value="1"/>
</dbReference>
<dbReference type="PANTHER" id="PTHR15184">
    <property type="entry name" value="ATP SYNTHASE"/>
    <property type="match status" value="1"/>
</dbReference>
<dbReference type="PANTHER" id="PTHR15184:SF71">
    <property type="entry name" value="ATP SYNTHASE SUBUNIT BETA, MITOCHONDRIAL"/>
    <property type="match status" value="1"/>
</dbReference>
<dbReference type="Pfam" id="PF00006">
    <property type="entry name" value="ATP-synt_ab"/>
    <property type="match status" value="1"/>
</dbReference>
<dbReference type="Pfam" id="PF02874">
    <property type="entry name" value="ATP-synt_ab_N"/>
    <property type="match status" value="1"/>
</dbReference>
<dbReference type="Pfam" id="PF22919">
    <property type="entry name" value="ATP-synt_VA_C"/>
    <property type="match status" value="1"/>
</dbReference>
<dbReference type="SMART" id="SM00382">
    <property type="entry name" value="AAA"/>
    <property type="match status" value="1"/>
</dbReference>
<dbReference type="SUPFAM" id="SSF47917">
    <property type="entry name" value="C-terminal domain of alpha and beta subunits of F1 ATP synthase"/>
    <property type="match status" value="1"/>
</dbReference>
<dbReference type="SUPFAM" id="SSF50615">
    <property type="entry name" value="N-terminal domain of alpha and beta subunits of F1 ATP synthase"/>
    <property type="match status" value="1"/>
</dbReference>
<dbReference type="SUPFAM" id="SSF52540">
    <property type="entry name" value="P-loop containing nucleoside triphosphate hydrolases"/>
    <property type="match status" value="1"/>
</dbReference>
<dbReference type="PROSITE" id="PS00152">
    <property type="entry name" value="ATPASE_ALPHA_BETA"/>
    <property type="match status" value="1"/>
</dbReference>
<name>ATPB_THEP1</name>
<feature type="chain" id="PRO_1000055177" description="ATP synthase subunit beta">
    <location>
        <begin position="1"/>
        <end position="468"/>
    </location>
</feature>
<feature type="binding site" evidence="1">
    <location>
        <begin position="155"/>
        <end position="162"/>
    </location>
    <ligand>
        <name>ATP</name>
        <dbReference type="ChEBI" id="CHEBI:30616"/>
    </ligand>
</feature>
<reference key="1">
    <citation type="submission" date="2007-05" db="EMBL/GenBank/DDBJ databases">
        <title>Complete sequence of Thermotoga petrophila RKU-1.</title>
        <authorList>
            <consortium name="US DOE Joint Genome Institute"/>
            <person name="Copeland A."/>
            <person name="Lucas S."/>
            <person name="Lapidus A."/>
            <person name="Barry K."/>
            <person name="Glavina del Rio T."/>
            <person name="Dalin E."/>
            <person name="Tice H."/>
            <person name="Pitluck S."/>
            <person name="Sims D."/>
            <person name="Brettin T."/>
            <person name="Bruce D."/>
            <person name="Detter J.C."/>
            <person name="Han C."/>
            <person name="Tapia R."/>
            <person name="Schmutz J."/>
            <person name="Larimer F."/>
            <person name="Land M."/>
            <person name="Hauser L."/>
            <person name="Kyrpides N."/>
            <person name="Mikhailova N."/>
            <person name="Nelson K."/>
            <person name="Gogarten J.P."/>
            <person name="Noll K."/>
            <person name="Richardson P."/>
        </authorList>
    </citation>
    <scope>NUCLEOTIDE SEQUENCE [LARGE SCALE GENOMIC DNA]</scope>
    <source>
        <strain>ATCC BAA-488 / DSM 13995 / JCM 10881 / RKU-1</strain>
    </source>
</reference>
<comment type="function">
    <text evidence="1">Produces ATP from ADP in the presence of a proton gradient across the membrane. The catalytic sites are hosted primarily by the beta subunits.</text>
</comment>
<comment type="catalytic activity">
    <reaction evidence="1">
        <text>ATP + H2O + 4 H(+)(in) = ADP + phosphate + 5 H(+)(out)</text>
        <dbReference type="Rhea" id="RHEA:57720"/>
        <dbReference type="ChEBI" id="CHEBI:15377"/>
        <dbReference type="ChEBI" id="CHEBI:15378"/>
        <dbReference type="ChEBI" id="CHEBI:30616"/>
        <dbReference type="ChEBI" id="CHEBI:43474"/>
        <dbReference type="ChEBI" id="CHEBI:456216"/>
        <dbReference type="EC" id="7.1.2.2"/>
    </reaction>
</comment>
<comment type="subunit">
    <text evidence="1">F-type ATPases have 2 components, CF(1) - the catalytic core - and CF(0) - the membrane proton channel. CF(1) has five subunits: alpha(3), beta(3), gamma(1), delta(1), epsilon(1). CF(0) has three main subunits: a(1), b(2) and c(9-12). The alpha and beta chains form an alternating ring which encloses part of the gamma chain. CF(1) is attached to CF(0) by a central stalk formed by the gamma and epsilon chains, while a peripheral stalk is formed by the delta and b chains.</text>
</comment>
<comment type="subcellular location">
    <subcellularLocation>
        <location evidence="1">Cell inner membrane</location>
        <topology evidence="1">Peripheral membrane protein</topology>
    </subcellularLocation>
</comment>
<comment type="similarity">
    <text evidence="1">Belongs to the ATPase alpha/beta chains family.</text>
</comment>
<protein>
    <recommendedName>
        <fullName evidence="1">ATP synthase subunit beta</fullName>
        <ecNumber evidence="1">7.1.2.2</ecNumber>
    </recommendedName>
    <alternativeName>
        <fullName evidence="1">ATP synthase F1 sector subunit beta</fullName>
    </alternativeName>
    <alternativeName>
        <fullName evidence="1">F-ATPase subunit beta</fullName>
    </alternativeName>
</protein>
<proteinExistence type="inferred from homology"/>